<name>HLDD_PECAS</name>
<gene>
    <name evidence="1" type="primary">hldD</name>
    <name type="ordered locus">ECA0165</name>
</gene>
<evidence type="ECO:0000255" key="1">
    <source>
        <dbReference type="HAMAP-Rule" id="MF_01601"/>
    </source>
</evidence>
<sequence length="310" mass="34784">MIIVTGGAGFIGSNIVKSLNDIGYRDILVVDNLKDGTKFVNLVDLDIADYVDKEDFVASIVAGDDLGDIEAVFHEGACSSTTEWDGKYMMDNNYQYSKDVLHYCLDRSIPFLYASSAATYGGRNDNFIEDRQYEQPLNVYGYSKFLFDQYVREILPEAESQICGFRYFNVYGPREGHKGSMASVAFHLNNQINQGENPKLFSGSENFKRDFIYVGDVAAVNLWFWQNGVSGIFNCGTGRAESFQAVADATLAFHNKGGVEYIEFPEKLKGRYQAYTQADLTNLRAAGYDKPFKTVAEGVAEYMTWLNRTV</sequence>
<keyword id="KW-0119">Carbohydrate metabolism</keyword>
<keyword id="KW-0413">Isomerase</keyword>
<keyword id="KW-0521">NADP</keyword>
<keyword id="KW-1185">Reference proteome</keyword>
<protein>
    <recommendedName>
        <fullName evidence="1">ADP-L-glycero-D-manno-heptose-6-epimerase</fullName>
        <ecNumber evidence="1">5.1.3.20</ecNumber>
    </recommendedName>
    <alternativeName>
        <fullName evidence="1">ADP-L-glycero-beta-D-manno-heptose-6-epimerase</fullName>
        <shortName evidence="1">ADP-glyceromanno-heptose 6-epimerase</shortName>
        <shortName evidence="1">ADP-hep 6-epimerase</shortName>
        <shortName evidence="1">AGME</shortName>
    </alternativeName>
</protein>
<proteinExistence type="inferred from homology"/>
<organism>
    <name type="scientific">Pectobacterium atrosepticum (strain SCRI 1043 / ATCC BAA-672)</name>
    <name type="common">Erwinia carotovora subsp. atroseptica</name>
    <dbReference type="NCBI Taxonomy" id="218491"/>
    <lineage>
        <taxon>Bacteria</taxon>
        <taxon>Pseudomonadati</taxon>
        <taxon>Pseudomonadota</taxon>
        <taxon>Gammaproteobacteria</taxon>
        <taxon>Enterobacterales</taxon>
        <taxon>Pectobacteriaceae</taxon>
        <taxon>Pectobacterium</taxon>
    </lineage>
</organism>
<feature type="chain" id="PRO_0000255728" description="ADP-L-glycero-D-manno-heptose-6-epimerase">
    <location>
        <begin position="1"/>
        <end position="310"/>
    </location>
</feature>
<feature type="active site" description="Proton acceptor" evidence="1">
    <location>
        <position position="140"/>
    </location>
</feature>
<feature type="active site" description="Proton acceptor" evidence="1">
    <location>
        <position position="178"/>
    </location>
</feature>
<feature type="binding site" evidence="1">
    <location>
        <begin position="10"/>
        <end position="11"/>
    </location>
    <ligand>
        <name>NADP(+)</name>
        <dbReference type="ChEBI" id="CHEBI:58349"/>
    </ligand>
</feature>
<feature type="binding site" evidence="1">
    <location>
        <begin position="31"/>
        <end position="32"/>
    </location>
    <ligand>
        <name>NADP(+)</name>
        <dbReference type="ChEBI" id="CHEBI:58349"/>
    </ligand>
</feature>
<feature type="binding site" evidence="1">
    <location>
        <position position="38"/>
    </location>
    <ligand>
        <name>NADP(+)</name>
        <dbReference type="ChEBI" id="CHEBI:58349"/>
    </ligand>
</feature>
<feature type="binding site" evidence="1">
    <location>
        <position position="53"/>
    </location>
    <ligand>
        <name>NADP(+)</name>
        <dbReference type="ChEBI" id="CHEBI:58349"/>
    </ligand>
</feature>
<feature type="binding site" evidence="1">
    <location>
        <begin position="75"/>
        <end position="79"/>
    </location>
    <ligand>
        <name>NADP(+)</name>
        <dbReference type="ChEBI" id="CHEBI:58349"/>
    </ligand>
</feature>
<feature type="binding site" evidence="1">
    <location>
        <position position="92"/>
    </location>
    <ligand>
        <name>NADP(+)</name>
        <dbReference type="ChEBI" id="CHEBI:58349"/>
    </ligand>
</feature>
<feature type="binding site" evidence="1">
    <location>
        <position position="144"/>
    </location>
    <ligand>
        <name>NADP(+)</name>
        <dbReference type="ChEBI" id="CHEBI:58349"/>
    </ligand>
</feature>
<feature type="binding site" evidence="1">
    <location>
        <position position="169"/>
    </location>
    <ligand>
        <name>substrate</name>
    </ligand>
</feature>
<feature type="binding site" evidence="1">
    <location>
        <position position="170"/>
    </location>
    <ligand>
        <name>NADP(+)</name>
        <dbReference type="ChEBI" id="CHEBI:58349"/>
    </ligand>
</feature>
<feature type="binding site" evidence="1">
    <location>
        <position position="178"/>
    </location>
    <ligand>
        <name>NADP(+)</name>
        <dbReference type="ChEBI" id="CHEBI:58349"/>
    </ligand>
</feature>
<feature type="binding site" evidence="1">
    <location>
        <position position="180"/>
    </location>
    <ligand>
        <name>substrate</name>
    </ligand>
</feature>
<feature type="binding site" evidence="1">
    <location>
        <position position="187"/>
    </location>
    <ligand>
        <name>substrate</name>
    </ligand>
</feature>
<feature type="binding site" evidence="1">
    <location>
        <begin position="201"/>
        <end position="204"/>
    </location>
    <ligand>
        <name>substrate</name>
    </ligand>
</feature>
<feature type="binding site" evidence="1">
    <location>
        <position position="209"/>
    </location>
    <ligand>
        <name>substrate</name>
    </ligand>
</feature>
<feature type="binding site" evidence="1">
    <location>
        <position position="272"/>
    </location>
    <ligand>
        <name>substrate</name>
    </ligand>
</feature>
<comment type="function">
    <text evidence="1">Catalyzes the interconversion between ADP-D-glycero-beta-D-manno-heptose and ADP-L-glycero-beta-D-manno-heptose via an epimerization at carbon 6 of the heptose.</text>
</comment>
<comment type="catalytic activity">
    <reaction evidence="1">
        <text>ADP-D-glycero-beta-D-manno-heptose = ADP-L-glycero-beta-D-manno-heptose</text>
        <dbReference type="Rhea" id="RHEA:17577"/>
        <dbReference type="ChEBI" id="CHEBI:59967"/>
        <dbReference type="ChEBI" id="CHEBI:61506"/>
        <dbReference type="EC" id="5.1.3.20"/>
    </reaction>
</comment>
<comment type="cofactor">
    <cofactor evidence="1">
        <name>NADP(+)</name>
        <dbReference type="ChEBI" id="CHEBI:58349"/>
    </cofactor>
    <text evidence="1">Binds 1 NADP(+) per subunit.</text>
</comment>
<comment type="pathway">
    <text evidence="1">Nucleotide-sugar biosynthesis; ADP-L-glycero-beta-D-manno-heptose biosynthesis; ADP-L-glycero-beta-D-manno-heptose from D-glycero-beta-D-manno-heptose 7-phosphate: step 4/4.</text>
</comment>
<comment type="subunit">
    <text evidence="1">Homopentamer.</text>
</comment>
<comment type="domain">
    <text evidence="1">Contains a large N-terminal NADP-binding domain, and a smaller C-terminal substrate-binding domain.</text>
</comment>
<comment type="similarity">
    <text evidence="1">Belongs to the NAD(P)-dependent epimerase/dehydratase family. HldD subfamily.</text>
</comment>
<accession>Q6DAT7</accession>
<reference key="1">
    <citation type="journal article" date="2004" name="Proc. Natl. Acad. Sci. U.S.A.">
        <title>Genome sequence of the enterobacterial phytopathogen Erwinia carotovora subsp. atroseptica and characterization of virulence factors.</title>
        <authorList>
            <person name="Bell K.S."/>
            <person name="Sebaihia M."/>
            <person name="Pritchard L."/>
            <person name="Holden M.T.G."/>
            <person name="Hyman L.J."/>
            <person name="Holeva M.C."/>
            <person name="Thomson N.R."/>
            <person name="Bentley S.D."/>
            <person name="Churcher L.J.C."/>
            <person name="Mungall K."/>
            <person name="Atkin R."/>
            <person name="Bason N."/>
            <person name="Brooks K."/>
            <person name="Chillingworth T."/>
            <person name="Clark K."/>
            <person name="Doggett J."/>
            <person name="Fraser A."/>
            <person name="Hance Z."/>
            <person name="Hauser H."/>
            <person name="Jagels K."/>
            <person name="Moule S."/>
            <person name="Norbertczak H."/>
            <person name="Ormond D."/>
            <person name="Price C."/>
            <person name="Quail M.A."/>
            <person name="Sanders M."/>
            <person name="Walker D."/>
            <person name="Whitehead S."/>
            <person name="Salmond G.P.C."/>
            <person name="Birch P.R.J."/>
            <person name="Parkhill J."/>
            <person name="Toth I.K."/>
        </authorList>
    </citation>
    <scope>NUCLEOTIDE SEQUENCE [LARGE SCALE GENOMIC DNA]</scope>
    <source>
        <strain>SCRI 1043 / ATCC BAA-672</strain>
    </source>
</reference>
<dbReference type="EC" id="5.1.3.20" evidence="1"/>
<dbReference type="EMBL" id="BX950851">
    <property type="protein sequence ID" value="CAG73085.1"/>
    <property type="molecule type" value="Genomic_DNA"/>
</dbReference>
<dbReference type="SMR" id="Q6DAT7"/>
<dbReference type="STRING" id="218491.ECA0165"/>
<dbReference type="KEGG" id="eca:ECA0165"/>
<dbReference type="eggNOG" id="COG0451">
    <property type="taxonomic scope" value="Bacteria"/>
</dbReference>
<dbReference type="HOGENOM" id="CLU_007383_1_3_6"/>
<dbReference type="OrthoDB" id="9803010at2"/>
<dbReference type="UniPathway" id="UPA00356">
    <property type="reaction ID" value="UER00440"/>
</dbReference>
<dbReference type="Proteomes" id="UP000007966">
    <property type="component" value="Chromosome"/>
</dbReference>
<dbReference type="GO" id="GO:0008712">
    <property type="term" value="F:ADP-glyceromanno-heptose 6-epimerase activity"/>
    <property type="evidence" value="ECO:0007669"/>
    <property type="project" value="UniProtKB-UniRule"/>
</dbReference>
<dbReference type="GO" id="GO:0050661">
    <property type="term" value="F:NADP binding"/>
    <property type="evidence" value="ECO:0007669"/>
    <property type="project" value="InterPro"/>
</dbReference>
<dbReference type="GO" id="GO:0097171">
    <property type="term" value="P:ADP-L-glycero-beta-D-manno-heptose biosynthetic process"/>
    <property type="evidence" value="ECO:0007669"/>
    <property type="project" value="UniProtKB-UniPathway"/>
</dbReference>
<dbReference type="GO" id="GO:0005975">
    <property type="term" value="P:carbohydrate metabolic process"/>
    <property type="evidence" value="ECO:0007669"/>
    <property type="project" value="UniProtKB-UniRule"/>
</dbReference>
<dbReference type="CDD" id="cd05248">
    <property type="entry name" value="ADP_GME_SDR_e"/>
    <property type="match status" value="1"/>
</dbReference>
<dbReference type="Gene3D" id="3.40.50.720">
    <property type="entry name" value="NAD(P)-binding Rossmann-like Domain"/>
    <property type="match status" value="1"/>
</dbReference>
<dbReference type="Gene3D" id="3.90.25.10">
    <property type="entry name" value="UDP-galactose 4-epimerase, domain 1"/>
    <property type="match status" value="1"/>
</dbReference>
<dbReference type="HAMAP" id="MF_01601">
    <property type="entry name" value="Heptose_epimerase"/>
    <property type="match status" value="1"/>
</dbReference>
<dbReference type="InterPro" id="IPR001509">
    <property type="entry name" value="Epimerase_deHydtase"/>
</dbReference>
<dbReference type="InterPro" id="IPR011912">
    <property type="entry name" value="Heptose_epim"/>
</dbReference>
<dbReference type="InterPro" id="IPR036291">
    <property type="entry name" value="NAD(P)-bd_dom_sf"/>
</dbReference>
<dbReference type="NCBIfam" id="TIGR02197">
    <property type="entry name" value="heptose_epim"/>
    <property type="match status" value="1"/>
</dbReference>
<dbReference type="NCBIfam" id="NF008360">
    <property type="entry name" value="PRK11150.1"/>
    <property type="match status" value="1"/>
</dbReference>
<dbReference type="PANTHER" id="PTHR43103:SF3">
    <property type="entry name" value="ADP-L-GLYCERO-D-MANNO-HEPTOSE-6-EPIMERASE"/>
    <property type="match status" value="1"/>
</dbReference>
<dbReference type="PANTHER" id="PTHR43103">
    <property type="entry name" value="NUCLEOSIDE-DIPHOSPHATE-SUGAR EPIMERASE"/>
    <property type="match status" value="1"/>
</dbReference>
<dbReference type="Pfam" id="PF01370">
    <property type="entry name" value="Epimerase"/>
    <property type="match status" value="1"/>
</dbReference>
<dbReference type="SUPFAM" id="SSF51735">
    <property type="entry name" value="NAD(P)-binding Rossmann-fold domains"/>
    <property type="match status" value="1"/>
</dbReference>